<dbReference type="EMBL" id="CP000826">
    <property type="protein sequence ID" value="ABV40421.1"/>
    <property type="molecule type" value="Genomic_DNA"/>
</dbReference>
<dbReference type="SMR" id="A8GBD1"/>
<dbReference type="STRING" id="399741.Spro_1317"/>
<dbReference type="KEGG" id="spe:Spro_1317"/>
<dbReference type="eggNOG" id="COG0556">
    <property type="taxonomic scope" value="Bacteria"/>
</dbReference>
<dbReference type="HOGENOM" id="CLU_009621_2_1_6"/>
<dbReference type="OrthoDB" id="9806651at2"/>
<dbReference type="GO" id="GO:0005737">
    <property type="term" value="C:cytoplasm"/>
    <property type="evidence" value="ECO:0007669"/>
    <property type="project" value="UniProtKB-SubCell"/>
</dbReference>
<dbReference type="GO" id="GO:0009380">
    <property type="term" value="C:excinuclease repair complex"/>
    <property type="evidence" value="ECO:0007669"/>
    <property type="project" value="InterPro"/>
</dbReference>
<dbReference type="GO" id="GO:0005524">
    <property type="term" value="F:ATP binding"/>
    <property type="evidence" value="ECO:0007669"/>
    <property type="project" value="UniProtKB-UniRule"/>
</dbReference>
<dbReference type="GO" id="GO:0016887">
    <property type="term" value="F:ATP hydrolysis activity"/>
    <property type="evidence" value="ECO:0007669"/>
    <property type="project" value="InterPro"/>
</dbReference>
<dbReference type="GO" id="GO:0003677">
    <property type="term" value="F:DNA binding"/>
    <property type="evidence" value="ECO:0007669"/>
    <property type="project" value="UniProtKB-UniRule"/>
</dbReference>
<dbReference type="GO" id="GO:0009381">
    <property type="term" value="F:excinuclease ABC activity"/>
    <property type="evidence" value="ECO:0007669"/>
    <property type="project" value="UniProtKB-UniRule"/>
</dbReference>
<dbReference type="GO" id="GO:0004386">
    <property type="term" value="F:helicase activity"/>
    <property type="evidence" value="ECO:0007669"/>
    <property type="project" value="UniProtKB-KW"/>
</dbReference>
<dbReference type="GO" id="GO:0006289">
    <property type="term" value="P:nucleotide-excision repair"/>
    <property type="evidence" value="ECO:0007669"/>
    <property type="project" value="UniProtKB-UniRule"/>
</dbReference>
<dbReference type="GO" id="GO:0009432">
    <property type="term" value="P:SOS response"/>
    <property type="evidence" value="ECO:0007669"/>
    <property type="project" value="UniProtKB-UniRule"/>
</dbReference>
<dbReference type="CDD" id="cd17916">
    <property type="entry name" value="DEXHc_UvrB"/>
    <property type="match status" value="1"/>
</dbReference>
<dbReference type="CDD" id="cd18790">
    <property type="entry name" value="SF2_C_UvrB"/>
    <property type="match status" value="1"/>
</dbReference>
<dbReference type="FunFam" id="3.40.50.300:FF:000257">
    <property type="entry name" value="UvrABC system protein B"/>
    <property type="match status" value="1"/>
</dbReference>
<dbReference type="FunFam" id="3.40.50.300:FF:000401">
    <property type="entry name" value="UvrABC system protein B"/>
    <property type="match status" value="1"/>
</dbReference>
<dbReference type="FunFam" id="3.40.50.300:FF:000477">
    <property type="entry name" value="UvrABC system protein B"/>
    <property type="match status" value="1"/>
</dbReference>
<dbReference type="Gene3D" id="3.40.50.300">
    <property type="entry name" value="P-loop containing nucleotide triphosphate hydrolases"/>
    <property type="match status" value="3"/>
</dbReference>
<dbReference type="Gene3D" id="4.10.860.10">
    <property type="entry name" value="UVR domain"/>
    <property type="match status" value="1"/>
</dbReference>
<dbReference type="HAMAP" id="MF_00204">
    <property type="entry name" value="UvrB"/>
    <property type="match status" value="1"/>
</dbReference>
<dbReference type="InterPro" id="IPR006935">
    <property type="entry name" value="Helicase/UvrB_N"/>
</dbReference>
<dbReference type="InterPro" id="IPR014001">
    <property type="entry name" value="Helicase_ATP-bd"/>
</dbReference>
<dbReference type="InterPro" id="IPR001650">
    <property type="entry name" value="Helicase_C-like"/>
</dbReference>
<dbReference type="InterPro" id="IPR027417">
    <property type="entry name" value="P-loop_NTPase"/>
</dbReference>
<dbReference type="InterPro" id="IPR001943">
    <property type="entry name" value="UVR_dom"/>
</dbReference>
<dbReference type="InterPro" id="IPR036876">
    <property type="entry name" value="UVR_dom_sf"/>
</dbReference>
<dbReference type="InterPro" id="IPR004807">
    <property type="entry name" value="UvrB"/>
</dbReference>
<dbReference type="InterPro" id="IPR041471">
    <property type="entry name" value="UvrB_inter"/>
</dbReference>
<dbReference type="InterPro" id="IPR024759">
    <property type="entry name" value="UvrB_YAD/RRR_dom"/>
</dbReference>
<dbReference type="NCBIfam" id="NF003673">
    <property type="entry name" value="PRK05298.1"/>
    <property type="match status" value="1"/>
</dbReference>
<dbReference type="NCBIfam" id="TIGR00631">
    <property type="entry name" value="uvrb"/>
    <property type="match status" value="1"/>
</dbReference>
<dbReference type="PANTHER" id="PTHR24029">
    <property type="entry name" value="UVRABC SYSTEM PROTEIN B"/>
    <property type="match status" value="1"/>
</dbReference>
<dbReference type="PANTHER" id="PTHR24029:SF0">
    <property type="entry name" value="UVRABC SYSTEM PROTEIN B"/>
    <property type="match status" value="1"/>
</dbReference>
<dbReference type="Pfam" id="PF00271">
    <property type="entry name" value="Helicase_C"/>
    <property type="match status" value="1"/>
</dbReference>
<dbReference type="Pfam" id="PF04851">
    <property type="entry name" value="ResIII"/>
    <property type="match status" value="1"/>
</dbReference>
<dbReference type="Pfam" id="PF02151">
    <property type="entry name" value="UVR"/>
    <property type="match status" value="1"/>
</dbReference>
<dbReference type="Pfam" id="PF12344">
    <property type="entry name" value="UvrB"/>
    <property type="match status" value="1"/>
</dbReference>
<dbReference type="Pfam" id="PF17757">
    <property type="entry name" value="UvrB_inter"/>
    <property type="match status" value="1"/>
</dbReference>
<dbReference type="SMART" id="SM00487">
    <property type="entry name" value="DEXDc"/>
    <property type="match status" value="1"/>
</dbReference>
<dbReference type="SMART" id="SM00490">
    <property type="entry name" value="HELICc"/>
    <property type="match status" value="1"/>
</dbReference>
<dbReference type="SUPFAM" id="SSF46600">
    <property type="entry name" value="C-terminal UvrC-binding domain of UvrB"/>
    <property type="match status" value="1"/>
</dbReference>
<dbReference type="SUPFAM" id="SSF52540">
    <property type="entry name" value="P-loop containing nucleoside triphosphate hydrolases"/>
    <property type="match status" value="2"/>
</dbReference>
<dbReference type="PROSITE" id="PS51192">
    <property type="entry name" value="HELICASE_ATP_BIND_1"/>
    <property type="match status" value="1"/>
</dbReference>
<dbReference type="PROSITE" id="PS51194">
    <property type="entry name" value="HELICASE_CTER"/>
    <property type="match status" value="1"/>
</dbReference>
<dbReference type="PROSITE" id="PS50151">
    <property type="entry name" value="UVR"/>
    <property type="match status" value="1"/>
</dbReference>
<reference key="1">
    <citation type="submission" date="2007-09" db="EMBL/GenBank/DDBJ databases">
        <title>Complete sequence of chromosome of Serratia proteamaculans 568.</title>
        <authorList>
            <consortium name="US DOE Joint Genome Institute"/>
            <person name="Copeland A."/>
            <person name="Lucas S."/>
            <person name="Lapidus A."/>
            <person name="Barry K."/>
            <person name="Glavina del Rio T."/>
            <person name="Dalin E."/>
            <person name="Tice H."/>
            <person name="Pitluck S."/>
            <person name="Chain P."/>
            <person name="Malfatti S."/>
            <person name="Shin M."/>
            <person name="Vergez L."/>
            <person name="Schmutz J."/>
            <person name="Larimer F."/>
            <person name="Land M."/>
            <person name="Hauser L."/>
            <person name="Kyrpides N."/>
            <person name="Kim E."/>
            <person name="Taghavi S."/>
            <person name="Newman L."/>
            <person name="Vangronsveld J."/>
            <person name="van der Lelie D."/>
            <person name="Richardson P."/>
        </authorList>
    </citation>
    <scope>NUCLEOTIDE SEQUENCE [LARGE SCALE GENOMIC DNA]</scope>
    <source>
        <strain>568</strain>
    </source>
</reference>
<accession>A8GBD1</accession>
<sequence>MSKVFKLHSEFKPAGDQPQAISKLEEGLEDGLAHQTLLGVTGSGKTFTVANVIADLNRPTMVLAPNKTLAAQLYGEMKEFFPENAVEYFVSYYDYYQPEAYVPSSDTFIEKDAAVNEHIEQMRLSATKALLERRDVIVVASVSAIYGLGDPDLYLKMMLHLTKGMIIDQRSILRRLAELQYARNDQAFQRATFRVRGEVIDVFPAESDELALRIELFDEEVERLSLFDPLTGQIEQVVQRFTIYPKSHYVTPRERILQAMEEIKVDLAERRKVLLANNKLLEEQRLTQRTQFDLEMMKELGYCSGIENYSRYLSGRKEGEPPPTLFDYLPADGLLVVDESHVTIPQIGAMYKGDRSRKETLVEYGFRLPSALDNRPMRFEEFEALAPQTIYVSATPGKYELEKSGDDIIDQVVRPTGLLDPLIEVRPVTTQVDDLLSEIRKRVAINERVLVTTLTKRMAEDLTEYLEEHGERVRYLHSDIDTVERVEIIRDLRLGEFDVLVGINLLREGLDMPEVSLVAILDADKEGFLRSERSLIQTIGRAARNLNGKAILYGDRITDSMARAISETERRRAKQQAFNEENGIVPQGLNKKVSDVLQLGKPGNRGKGRGKGKAAENVGQYKNLTPKALDQKIRELEAQMYTHAQNLEFELAAGLRDEIHQLREQFIAIS</sequence>
<gene>
    <name evidence="1" type="primary">uvrB</name>
    <name type="ordered locus">Spro_1317</name>
</gene>
<name>UVRB_SERP5</name>
<organism>
    <name type="scientific">Serratia proteamaculans (strain 568)</name>
    <dbReference type="NCBI Taxonomy" id="399741"/>
    <lineage>
        <taxon>Bacteria</taxon>
        <taxon>Pseudomonadati</taxon>
        <taxon>Pseudomonadota</taxon>
        <taxon>Gammaproteobacteria</taxon>
        <taxon>Enterobacterales</taxon>
        <taxon>Yersiniaceae</taxon>
        <taxon>Serratia</taxon>
    </lineage>
</organism>
<comment type="function">
    <text evidence="1">The UvrABC repair system catalyzes the recognition and processing of DNA lesions. A damage recognition complex composed of 2 UvrA and 2 UvrB subunits scans DNA for abnormalities. Upon binding of the UvrA(2)B(2) complex to a putative damaged site, the DNA wraps around one UvrB monomer. DNA wrap is dependent on ATP binding by UvrB and probably causes local melting of the DNA helix, facilitating insertion of UvrB beta-hairpin between the DNA strands. Then UvrB probes one DNA strand for the presence of a lesion. If a lesion is found the UvrA subunits dissociate and the UvrB-DNA preincision complex is formed. This complex is subsequently bound by UvrC and the second UvrB is released. If no lesion is found, the DNA wraps around the other UvrB subunit that will check the other stand for damage.</text>
</comment>
<comment type="subunit">
    <text evidence="1">Forms a heterotetramer with UvrA during the search for lesions. Interacts with UvrC in an incision complex.</text>
</comment>
<comment type="subcellular location">
    <subcellularLocation>
        <location evidence="1">Cytoplasm</location>
    </subcellularLocation>
</comment>
<comment type="domain">
    <text evidence="1">The beta-hairpin motif is involved in DNA binding.</text>
</comment>
<comment type="similarity">
    <text evidence="1">Belongs to the UvrB family.</text>
</comment>
<proteinExistence type="inferred from homology"/>
<keyword id="KW-0067">ATP-binding</keyword>
<keyword id="KW-0963">Cytoplasm</keyword>
<keyword id="KW-0227">DNA damage</keyword>
<keyword id="KW-0228">DNA excision</keyword>
<keyword id="KW-0234">DNA repair</keyword>
<keyword id="KW-0267">Excision nuclease</keyword>
<keyword id="KW-0347">Helicase</keyword>
<keyword id="KW-0378">Hydrolase</keyword>
<keyword id="KW-0547">Nucleotide-binding</keyword>
<keyword id="KW-0742">SOS response</keyword>
<protein>
    <recommendedName>
        <fullName evidence="1">UvrABC system protein B</fullName>
        <shortName evidence="1">Protein UvrB</shortName>
    </recommendedName>
    <alternativeName>
        <fullName evidence="1">Excinuclease ABC subunit B</fullName>
    </alternativeName>
</protein>
<feature type="chain" id="PRO_1000077921" description="UvrABC system protein B">
    <location>
        <begin position="1"/>
        <end position="670"/>
    </location>
</feature>
<feature type="domain" description="Helicase ATP-binding" evidence="1">
    <location>
        <begin position="26"/>
        <end position="183"/>
    </location>
</feature>
<feature type="domain" description="Helicase C-terminal" evidence="1">
    <location>
        <begin position="431"/>
        <end position="597"/>
    </location>
</feature>
<feature type="domain" description="UVR" evidence="1">
    <location>
        <begin position="630"/>
        <end position="665"/>
    </location>
</feature>
<feature type="short sequence motif" description="Beta-hairpin">
    <location>
        <begin position="92"/>
        <end position="115"/>
    </location>
</feature>
<feature type="binding site" evidence="1">
    <location>
        <begin position="39"/>
        <end position="46"/>
    </location>
    <ligand>
        <name>ATP</name>
        <dbReference type="ChEBI" id="CHEBI:30616"/>
    </ligand>
</feature>
<evidence type="ECO:0000255" key="1">
    <source>
        <dbReference type="HAMAP-Rule" id="MF_00204"/>
    </source>
</evidence>